<accession>Q9IV52</accession>
<comment type="function">
    <text evidence="1 3">Participates in the transport of viral genome to neighboring plant cells directly through plasmodesmata, without any budding (By similarity). TGBp2 and TGBp3 are necessary for intracellular delivery of TGBp1-containing vRNPs to plasmodesmata (By similarity). Can gate plasmodesmata and increase their size exclusion limit (PubMed:15608333). Induces host actin cytoskeleton network thickening, which probably plays a major role in virus cell-to-cell movement (By similarity).</text>
</comment>
<comment type="subunit">
    <text evidence="1 2 3">Interacts with movement protein TGB2 (PubMed:12093178, PubMed:15608333). TGB1-TGB3-TGB2 complex formation is enhanced by ATP hydrolysis (By similarity).</text>
</comment>
<comment type="subcellular location">
    <subcellularLocation>
        <location evidence="2 4">Host cell junction</location>
        <location evidence="2 4">Host plasmodesma</location>
    </subcellularLocation>
    <subcellularLocation>
        <location evidence="3 4">Host endoplasmic reticulum membrane</location>
        <topology evidence="4">Multi-pass membrane protein</topology>
    </subcellularLocation>
    <subcellularLocation>
        <location evidence="1">Host cytoplasm</location>
        <location evidence="1">Host cytoskeleton</location>
    </subcellularLocation>
    <text evidence="1">Probably localizes to plasmodesmata-associated membrane compartments called peripheral membrane bodies (PMBs). Associates with host actin filaments.</text>
</comment>
<comment type="domain">
    <text evidence="4">The 2nd transmembrane domain is involved in plasmodesmata targeting.</text>
</comment>
<comment type="similarity">
    <text evidence="6">Belongs to the virgaviridae TGB3 movement protein family.</text>
</comment>
<feature type="chain" id="PRO_0000410611" description="Movement protein TGB3">
    <location>
        <begin position="1"/>
        <end position="190"/>
    </location>
</feature>
<feature type="topological domain" description="Cytoplasmic" evidence="4">
    <location>
        <begin position="1"/>
        <end position="52"/>
    </location>
</feature>
<feature type="transmembrane region" description="Helical" evidence="4">
    <location>
        <begin position="53"/>
        <end position="73"/>
    </location>
</feature>
<feature type="topological domain" description="Lumenal" evidence="4">
    <location>
        <begin position="74"/>
        <end position="166"/>
    </location>
</feature>
<feature type="transmembrane region" description="Helical" evidence="4">
    <location>
        <begin position="167"/>
        <end position="187"/>
    </location>
</feature>
<feature type="topological domain" description="Cytoplasmic" evidence="4">
    <location>
        <begin position="188"/>
        <end position="190"/>
    </location>
</feature>
<feature type="short sequence motif" description="Involved in plasmodesmata targeting and virus cell-to-cell movement" evidence="4">
    <location>
        <begin position="89"/>
        <end position="93"/>
    </location>
</feature>
<feature type="modified residue" description="Phosphotyrosine" evidence="5">
    <location>
        <position position="89"/>
    </location>
</feature>
<feature type="modified residue" description="Phosphotyrosine" evidence="5">
    <location>
        <position position="120"/>
    </location>
</feature>
<feature type="mutagenesis site" description="Inhibition of cell-to-cell movement and enhanced interaction between TGBp3 and TGBp2." evidence="5">
    <original>YYY</original>
    <variation>AAA</variation>
    <location>
        <begin position="87"/>
        <end position="89"/>
    </location>
</feature>
<feature type="mutagenesis site" description="Complete loss of plamodesmal localization. 50% loss of plasmodesmata gating efficiency." evidence="3 4">
    <original>Y</original>
    <variation>G</variation>
    <location>
        <position position="89"/>
    </location>
</feature>
<feature type="mutagenesis site" description="Complete loss of infectivity but no effect on the interaction between TGBp3 and TGBp2." evidence="5">
    <original>Y</original>
    <variation>A</variation>
    <location>
        <position position="120"/>
    </location>
</feature>
<keyword id="KW-1031">Host cell junction</keyword>
<keyword id="KW-1035">Host cytoplasm</keyword>
<keyword id="KW-1037">Host cytoskeleton</keyword>
<keyword id="KW-1038">Host endoplasmic reticulum</keyword>
<keyword id="KW-1043">Host membrane</keyword>
<keyword id="KW-0472">Membrane</keyword>
<keyword id="KW-0597">Phosphoprotein</keyword>
<keyword id="KW-1185">Reference proteome</keyword>
<keyword id="KW-0812">Transmembrane</keyword>
<keyword id="KW-1133">Transmembrane helix</keyword>
<keyword id="KW-0813">Transport</keyword>
<keyword id="KW-0916">Viral movement protein</keyword>
<reference key="1">
    <citation type="journal article" date="2003" name="J. Gen. Virol.">
        <title>Potato mop-top virus: the coat protein-encoding RNA and the gene for cysteine-rich protein are dispensable for systemic virus movement in Nicotiana benthamiana.</title>
        <authorList>
            <person name="Savenkov E.I."/>
            <person name="Germundsson A."/>
            <person name="Zamyatnin A.A. Jr."/>
            <person name="Sandgren M."/>
            <person name="Valkonen J.P."/>
        </authorList>
    </citation>
    <scope>NUCLEOTIDE SEQUENCE [GENOMIC RNA]</scope>
</reference>
<reference key="2">
    <citation type="journal article" date="2002" name="Virology">
        <title>Subcellular localisation, protein interactions, and RNA binding of Potato mop-top virus triple gene block proteins.</title>
        <authorList>
            <person name="Cowan G.H."/>
            <person name="Lioliopoulou F."/>
            <person name="Ziegler A."/>
            <person name="Torrance L."/>
        </authorList>
    </citation>
    <scope>INTERACTION WITH TGB2</scope>
    <scope>SUBCELLULAR LOCATION</scope>
</reference>
<reference key="3">
    <citation type="journal article" date="2005" name="Plant Cell">
        <title>Two plant-viral movement proteins traffic in the endocytic recycling pathway.</title>
        <authorList>
            <person name="Haupt S."/>
            <person name="Cowan G.H."/>
            <person name="Ziegler A."/>
            <person name="Roberts A.G."/>
            <person name="Oparka K.J."/>
            <person name="Torrance L."/>
        </authorList>
    </citation>
    <scope>FUNCTION</scope>
    <scope>SUBCELLULAR LOCATION</scope>
    <scope>INTERACTION WITH TGB2</scope>
    <scope>MUTAGENESIS OF TYR-89</scope>
</reference>
<reference key="4">
    <citation type="journal article" date="2010" name="Virology">
        <title>Plasmodesmal targeting and intercellular movement of potato mop-top pomovirus is mediated by a membrane anchored tyrosine-based motif on the lumenal side of the endoplasmic reticulum and the C-terminal transmembrane domain in the TGB3 movement protein.</title>
        <authorList>
            <person name="Tilsner J."/>
            <person name="Cowan G.H."/>
            <person name="Roberts A.G."/>
            <person name="Chapman S.N."/>
            <person name="Ziegler A."/>
            <person name="Savenkov E."/>
            <person name="Torrance L."/>
        </authorList>
    </citation>
    <scope>FUNCTION</scope>
    <scope>TOPOLOGY</scope>
    <scope>SUBCELLULAR LOCATION</scope>
    <scope>MUTAGENESIS OF TYR-89</scope>
</reference>
<reference key="5">
    <citation type="journal article" date="2013" name="J. Virol.">
        <title>Tyrosine phosphorylation of the triple gene block protein 3 regulates cell-to-cell movement and protein interactions of Potato mop-top virus.</title>
        <authorList>
            <person name="Samuilova O."/>
            <person name="Santala J."/>
            <person name="Valkonen J.P."/>
        </authorList>
    </citation>
    <scope>PHOSPHORYLATION AT TYR-89 AND TYR-120</scope>
    <scope>MUTAGENESIS OF 87-TYR--TYR-89 AND TYR-120</scope>
</reference>
<proteinExistence type="evidence at protein level"/>
<dbReference type="EMBL" id="AJ277556">
    <property type="protein sequence ID" value="CAB91103.1"/>
    <property type="molecule type" value="Genomic_RNA"/>
</dbReference>
<dbReference type="RefSeq" id="NP_620440.1">
    <property type="nucleotide sequence ID" value="NC_003725.1"/>
</dbReference>
<dbReference type="SMR" id="Q9IV52"/>
<dbReference type="TCDB" id="9.B.308.6.1">
    <property type="family name" value="the lettuce infectious yellows virus p5 (liyv-p5) family"/>
</dbReference>
<dbReference type="iPTMnet" id="Q9IV52"/>
<dbReference type="GeneID" id="991176"/>
<dbReference type="KEGG" id="vg:991176"/>
<dbReference type="Proteomes" id="UP000006715">
    <property type="component" value="Genome"/>
</dbReference>
<dbReference type="GO" id="GO:0044167">
    <property type="term" value="C:host cell endoplasmic reticulum membrane"/>
    <property type="evidence" value="ECO:0007669"/>
    <property type="project" value="UniProtKB-SubCell"/>
</dbReference>
<dbReference type="GO" id="GO:0044219">
    <property type="term" value="C:host cell plasmodesma"/>
    <property type="evidence" value="ECO:0007669"/>
    <property type="project" value="UniProtKB-SubCell"/>
</dbReference>
<dbReference type="GO" id="GO:0044163">
    <property type="term" value="C:host cytoskeleton"/>
    <property type="evidence" value="ECO:0007669"/>
    <property type="project" value="UniProtKB-SubCell"/>
</dbReference>
<dbReference type="GO" id="GO:0016020">
    <property type="term" value="C:membrane"/>
    <property type="evidence" value="ECO:0007669"/>
    <property type="project" value="UniProtKB-KW"/>
</dbReference>
<dbReference type="GO" id="GO:0046740">
    <property type="term" value="P:transport of virus in host, cell to cell"/>
    <property type="evidence" value="ECO:0007669"/>
    <property type="project" value="UniProtKB-KW"/>
</dbReference>
<dbReference type="InterPro" id="IPR007617">
    <property type="entry name" value="Viral_beta_CD"/>
</dbReference>
<dbReference type="Pfam" id="PF04530">
    <property type="entry name" value="Viral_Beta_CD"/>
    <property type="match status" value="1"/>
</dbReference>
<name>TGB3_PMTVS</name>
<protein>
    <recommendedName>
        <fullName>Movement protein TGB3</fullName>
    </recommendedName>
    <alternativeName>
        <fullName>P21</fullName>
    </alternativeName>
    <alternativeName>
        <fullName>Triple gene block 3 protein</fullName>
        <shortName>TGBp3</shortName>
    </alternativeName>
</protein>
<organismHost>
    <name type="scientific">Solanum nigrum</name>
    <name type="common">Black nightshade</name>
    <dbReference type="NCBI Taxonomy" id="4112"/>
</organismHost>
<organismHost>
    <name type="scientific">Solanum tuberosum</name>
    <name type="common">Potato</name>
    <dbReference type="NCBI Taxonomy" id="4113"/>
</organismHost>
<sequence>MDPPVILHSPNCSCQFCSSELPSTHTCGSQDRTVPLHVEATAAGHMEAKNFSLQYVLLVAFVSVLLGFSFCVYLKSMSNDEASDMTYYYQDLNSVEIKLGKNPLDPEVIKAIHSFQEFPYGNIPSIRREAEFDVQNDESSAVVLSGSNNNRRQVASTPCENNVLLKLWKDDLSFTIIAVTVLVGAMLARC</sequence>
<organism>
    <name type="scientific">Potato mop-top virus (isolate Potato/Sweden/Sw)</name>
    <name type="common">PMTV</name>
    <dbReference type="NCBI Taxonomy" id="652839"/>
    <lineage>
        <taxon>Viruses</taxon>
        <taxon>Riboviria</taxon>
        <taxon>Orthornavirae</taxon>
        <taxon>Kitrinoviricota</taxon>
        <taxon>Alsuviricetes</taxon>
        <taxon>Martellivirales</taxon>
        <taxon>Virgaviridae</taxon>
        <taxon>Pomovirus</taxon>
        <taxon>Potato mop-top virus</taxon>
    </lineage>
</organism>
<evidence type="ECO:0000250" key="1">
    <source>
        <dbReference type="UniProtKB" id="P04868"/>
    </source>
</evidence>
<evidence type="ECO:0000269" key="2">
    <source>
    </source>
</evidence>
<evidence type="ECO:0000269" key="3">
    <source>
    </source>
</evidence>
<evidence type="ECO:0000269" key="4">
    <source>
    </source>
</evidence>
<evidence type="ECO:0000269" key="5">
    <source>
    </source>
</evidence>
<evidence type="ECO:0000305" key="6"/>